<keyword id="KW-0997">Cell inner membrane</keyword>
<keyword id="KW-1003">Cell membrane</keyword>
<keyword id="KW-0460">Magnesium</keyword>
<keyword id="KW-0472">Membrane</keyword>
<keyword id="KW-0808">Transferase</keyword>
<keyword id="KW-0812">Transmembrane</keyword>
<keyword id="KW-1133">Transmembrane helix</keyword>
<keyword id="KW-0831">Ubiquinone biosynthesis</keyword>
<protein>
    <recommendedName>
        <fullName evidence="1">4-hydroxybenzoate octaprenyltransferase</fullName>
        <ecNumber evidence="1">2.5.1.39</ecNumber>
    </recommendedName>
    <alternativeName>
        <fullName evidence="1">4-HB polyprenyltransferase</fullName>
    </alternativeName>
</protein>
<comment type="function">
    <text evidence="1">Catalyzes the prenylation of para-hydroxybenzoate (PHB) with an all-trans polyprenyl group. Mediates the second step in the final reaction sequence of ubiquinone-8 (UQ-8) biosynthesis, which is the condensation of the polyisoprenoid side chain with PHB, generating the first membrane-bound Q intermediate 3-octaprenyl-4-hydroxybenzoate.</text>
</comment>
<comment type="catalytic activity">
    <reaction evidence="1">
        <text>all-trans-octaprenyl diphosphate + 4-hydroxybenzoate = 4-hydroxy-3-(all-trans-octaprenyl)benzoate + diphosphate</text>
        <dbReference type="Rhea" id="RHEA:27782"/>
        <dbReference type="ChEBI" id="CHEBI:1617"/>
        <dbReference type="ChEBI" id="CHEBI:17879"/>
        <dbReference type="ChEBI" id="CHEBI:33019"/>
        <dbReference type="ChEBI" id="CHEBI:57711"/>
        <dbReference type="EC" id="2.5.1.39"/>
    </reaction>
</comment>
<comment type="cofactor">
    <cofactor evidence="1">
        <name>Mg(2+)</name>
        <dbReference type="ChEBI" id="CHEBI:18420"/>
    </cofactor>
</comment>
<comment type="pathway">
    <text evidence="1">Cofactor biosynthesis; ubiquinone biosynthesis.</text>
</comment>
<comment type="subcellular location">
    <subcellularLocation>
        <location evidence="1">Cell inner membrane</location>
        <topology evidence="1">Multi-pass membrane protein</topology>
    </subcellularLocation>
</comment>
<comment type="similarity">
    <text evidence="1">Belongs to the UbiA prenyltransferase family.</text>
</comment>
<accession>B4TDL7</accession>
<organism>
    <name type="scientific">Salmonella heidelberg (strain SL476)</name>
    <dbReference type="NCBI Taxonomy" id="454169"/>
    <lineage>
        <taxon>Bacteria</taxon>
        <taxon>Pseudomonadati</taxon>
        <taxon>Pseudomonadota</taxon>
        <taxon>Gammaproteobacteria</taxon>
        <taxon>Enterobacterales</taxon>
        <taxon>Enterobacteriaceae</taxon>
        <taxon>Salmonella</taxon>
    </lineage>
</organism>
<sequence>MEWSLTQSKLLAFHRLMRTDKPIGALLLLWPTLWALWVATPGMPQLWILAVFVAGVWLMRAAGCVVNDYADRKFDGHVKRTVNRPLPSGAVTEKEARNLFVVLVLLAFLLVLTLNAMTILLSVAALALAWVYPFMKRYTHLPQVVLGAAFGWSIPMAFAAVSESLPLSCWLMFLANILWAVAYDTQYAMVDRDDDIKIGIKSTAILFGRYDTLIIGILQLGVMALMALIGWLNGLGWGYYWAVLVAGALFVYQQKLIANREREACFKAFMNNNYVGLVLFLGLAMSYWHF</sequence>
<evidence type="ECO:0000255" key="1">
    <source>
        <dbReference type="HAMAP-Rule" id="MF_01635"/>
    </source>
</evidence>
<feature type="chain" id="PRO_1000186685" description="4-hydroxybenzoate octaprenyltransferase">
    <location>
        <begin position="1"/>
        <end position="290"/>
    </location>
</feature>
<feature type="transmembrane region" description="Helical" evidence="1">
    <location>
        <begin position="23"/>
        <end position="43"/>
    </location>
</feature>
<feature type="transmembrane region" description="Helical" evidence="1">
    <location>
        <begin position="46"/>
        <end position="66"/>
    </location>
</feature>
<feature type="transmembrane region" description="Helical" evidence="1">
    <location>
        <begin position="99"/>
        <end position="119"/>
    </location>
</feature>
<feature type="transmembrane region" description="Helical" evidence="1">
    <location>
        <begin position="141"/>
        <end position="161"/>
    </location>
</feature>
<feature type="transmembrane region" description="Helical" evidence="1">
    <location>
        <begin position="163"/>
        <end position="183"/>
    </location>
</feature>
<feature type="transmembrane region" description="Helical" evidence="1">
    <location>
        <begin position="212"/>
        <end position="232"/>
    </location>
</feature>
<feature type="transmembrane region" description="Helical" evidence="1">
    <location>
        <begin position="233"/>
        <end position="253"/>
    </location>
</feature>
<feature type="transmembrane region" description="Helical" evidence="1">
    <location>
        <begin position="268"/>
        <end position="288"/>
    </location>
</feature>
<dbReference type="EC" id="2.5.1.39" evidence="1"/>
<dbReference type="EMBL" id="CP001120">
    <property type="protein sequence ID" value="ACF65865.1"/>
    <property type="molecule type" value="Genomic_DNA"/>
</dbReference>
<dbReference type="RefSeq" id="WP_000455249.1">
    <property type="nucleotide sequence ID" value="NC_011083.1"/>
</dbReference>
<dbReference type="SMR" id="B4TDL7"/>
<dbReference type="KEGG" id="seh:SeHA_C4576"/>
<dbReference type="HOGENOM" id="CLU_034879_1_0_6"/>
<dbReference type="UniPathway" id="UPA00232"/>
<dbReference type="Proteomes" id="UP000001866">
    <property type="component" value="Chromosome"/>
</dbReference>
<dbReference type="GO" id="GO:0005886">
    <property type="term" value="C:plasma membrane"/>
    <property type="evidence" value="ECO:0007669"/>
    <property type="project" value="UniProtKB-SubCell"/>
</dbReference>
<dbReference type="GO" id="GO:0008412">
    <property type="term" value="F:4-hydroxybenzoate polyprenyltransferase activity"/>
    <property type="evidence" value="ECO:0007669"/>
    <property type="project" value="UniProtKB-UniRule"/>
</dbReference>
<dbReference type="GO" id="GO:0006744">
    <property type="term" value="P:ubiquinone biosynthetic process"/>
    <property type="evidence" value="ECO:0007669"/>
    <property type="project" value="UniProtKB-UniRule"/>
</dbReference>
<dbReference type="CDD" id="cd13959">
    <property type="entry name" value="PT_UbiA_COQ2"/>
    <property type="match status" value="1"/>
</dbReference>
<dbReference type="FunFam" id="1.10.357.140:FF:000002">
    <property type="entry name" value="4-hydroxybenzoate octaprenyltransferase"/>
    <property type="match status" value="1"/>
</dbReference>
<dbReference type="FunFam" id="1.20.120.1780:FF:000001">
    <property type="entry name" value="4-hydroxybenzoate octaprenyltransferase"/>
    <property type="match status" value="1"/>
</dbReference>
<dbReference type="Gene3D" id="1.10.357.140">
    <property type="entry name" value="UbiA prenyltransferase"/>
    <property type="match status" value="1"/>
</dbReference>
<dbReference type="Gene3D" id="1.20.120.1780">
    <property type="entry name" value="UbiA prenyltransferase"/>
    <property type="match status" value="1"/>
</dbReference>
<dbReference type="HAMAP" id="MF_01635">
    <property type="entry name" value="UbiA"/>
    <property type="match status" value="1"/>
</dbReference>
<dbReference type="InterPro" id="IPR006370">
    <property type="entry name" value="HB_polyprenyltransferase-like"/>
</dbReference>
<dbReference type="InterPro" id="IPR039653">
    <property type="entry name" value="Prenyltransferase"/>
</dbReference>
<dbReference type="InterPro" id="IPR000537">
    <property type="entry name" value="UbiA_prenyltransferase"/>
</dbReference>
<dbReference type="InterPro" id="IPR030470">
    <property type="entry name" value="UbiA_prenylTrfase_CS"/>
</dbReference>
<dbReference type="InterPro" id="IPR044878">
    <property type="entry name" value="UbiA_sf"/>
</dbReference>
<dbReference type="NCBIfam" id="TIGR01474">
    <property type="entry name" value="ubiA_proteo"/>
    <property type="match status" value="1"/>
</dbReference>
<dbReference type="PANTHER" id="PTHR11048:SF28">
    <property type="entry name" value="4-HYDROXYBENZOATE POLYPRENYLTRANSFERASE, MITOCHONDRIAL"/>
    <property type="match status" value="1"/>
</dbReference>
<dbReference type="PANTHER" id="PTHR11048">
    <property type="entry name" value="PRENYLTRANSFERASES"/>
    <property type="match status" value="1"/>
</dbReference>
<dbReference type="Pfam" id="PF01040">
    <property type="entry name" value="UbiA"/>
    <property type="match status" value="1"/>
</dbReference>
<dbReference type="PROSITE" id="PS00943">
    <property type="entry name" value="UBIA"/>
    <property type="match status" value="1"/>
</dbReference>
<proteinExistence type="inferred from homology"/>
<gene>
    <name evidence="1" type="primary">ubiA</name>
    <name type="ordered locus">SeHA_C4576</name>
</gene>
<reference key="1">
    <citation type="journal article" date="2011" name="J. Bacteriol.">
        <title>Comparative genomics of 28 Salmonella enterica isolates: evidence for CRISPR-mediated adaptive sublineage evolution.</title>
        <authorList>
            <person name="Fricke W.F."/>
            <person name="Mammel M.K."/>
            <person name="McDermott P.F."/>
            <person name="Tartera C."/>
            <person name="White D.G."/>
            <person name="Leclerc J.E."/>
            <person name="Ravel J."/>
            <person name="Cebula T.A."/>
        </authorList>
    </citation>
    <scope>NUCLEOTIDE SEQUENCE [LARGE SCALE GENOMIC DNA]</scope>
    <source>
        <strain>SL476</strain>
    </source>
</reference>
<name>UBIA_SALHS</name>